<name>PEPT_EXIS2</name>
<accession>B1YFS8</accession>
<comment type="function">
    <text evidence="1">Cleaves the N-terminal amino acid of tripeptides.</text>
</comment>
<comment type="catalytic activity">
    <reaction evidence="1">
        <text>Release of the N-terminal residue from a tripeptide.</text>
        <dbReference type="EC" id="3.4.11.4"/>
    </reaction>
</comment>
<comment type="cofactor">
    <cofactor evidence="1">
        <name>Zn(2+)</name>
        <dbReference type="ChEBI" id="CHEBI:29105"/>
    </cofactor>
    <text evidence="1">Binds 2 Zn(2+) ions per subunit.</text>
</comment>
<comment type="subcellular location">
    <subcellularLocation>
        <location evidence="1">Cytoplasm</location>
    </subcellularLocation>
</comment>
<comment type="similarity">
    <text evidence="1">Belongs to the peptidase M20B family.</text>
</comment>
<keyword id="KW-0031">Aminopeptidase</keyword>
<keyword id="KW-0963">Cytoplasm</keyword>
<keyword id="KW-0378">Hydrolase</keyword>
<keyword id="KW-0479">Metal-binding</keyword>
<keyword id="KW-0482">Metalloprotease</keyword>
<keyword id="KW-0645">Protease</keyword>
<keyword id="KW-1185">Reference proteome</keyword>
<keyword id="KW-0862">Zinc</keyword>
<reference key="1">
    <citation type="submission" date="2008-04" db="EMBL/GenBank/DDBJ databases">
        <title>Complete sequence of chromosome of Exiguobacterium sibiricum 255-15.</title>
        <authorList>
            <consortium name="US DOE Joint Genome Institute"/>
            <person name="Copeland A."/>
            <person name="Lucas S."/>
            <person name="Lapidus A."/>
            <person name="Glavina del Rio T."/>
            <person name="Dalin E."/>
            <person name="Tice H."/>
            <person name="Bruce D."/>
            <person name="Goodwin L."/>
            <person name="Pitluck S."/>
            <person name="Kiss H."/>
            <person name="Chertkov O."/>
            <person name="Monk C."/>
            <person name="Brettin T."/>
            <person name="Detter J.C."/>
            <person name="Han C."/>
            <person name="Kuske C.R."/>
            <person name="Schmutz J."/>
            <person name="Larimer F."/>
            <person name="Land M."/>
            <person name="Hauser L."/>
            <person name="Kyrpides N."/>
            <person name="Mikhailova N."/>
            <person name="Vishnivetskaya T."/>
            <person name="Rodrigues D.F."/>
            <person name="Gilichinsky D."/>
            <person name="Tiedje J."/>
            <person name="Richardson P."/>
        </authorList>
    </citation>
    <scope>NUCLEOTIDE SEQUENCE [LARGE SCALE GENOMIC DNA]</scope>
    <source>
        <strain>DSM 17290 / CCUG 55495 / CIP 109462 / JCM 13490 / 255-15</strain>
    </source>
</reference>
<dbReference type="EC" id="3.4.11.4" evidence="1"/>
<dbReference type="EMBL" id="CP001022">
    <property type="protein sequence ID" value="ACB62403.1"/>
    <property type="molecule type" value="Genomic_DNA"/>
</dbReference>
<dbReference type="RefSeq" id="WP_012371818.1">
    <property type="nucleotide sequence ID" value="NC_010556.1"/>
</dbReference>
<dbReference type="SMR" id="B1YFS8"/>
<dbReference type="STRING" id="262543.Exig_2957"/>
<dbReference type="MEROPS" id="M20.003"/>
<dbReference type="KEGG" id="esi:Exig_2957"/>
<dbReference type="eggNOG" id="COG2195">
    <property type="taxonomic scope" value="Bacteria"/>
</dbReference>
<dbReference type="HOGENOM" id="CLU_053676_0_0_9"/>
<dbReference type="OrthoDB" id="9804934at2"/>
<dbReference type="Proteomes" id="UP000001681">
    <property type="component" value="Chromosome"/>
</dbReference>
<dbReference type="GO" id="GO:0005829">
    <property type="term" value="C:cytosol"/>
    <property type="evidence" value="ECO:0007669"/>
    <property type="project" value="TreeGrafter"/>
</dbReference>
<dbReference type="GO" id="GO:0008237">
    <property type="term" value="F:metallopeptidase activity"/>
    <property type="evidence" value="ECO:0007669"/>
    <property type="project" value="UniProtKB-KW"/>
</dbReference>
<dbReference type="GO" id="GO:0045148">
    <property type="term" value="F:tripeptide aminopeptidase activity"/>
    <property type="evidence" value="ECO:0007669"/>
    <property type="project" value="UniProtKB-UniRule"/>
</dbReference>
<dbReference type="GO" id="GO:0008270">
    <property type="term" value="F:zinc ion binding"/>
    <property type="evidence" value="ECO:0007669"/>
    <property type="project" value="UniProtKB-UniRule"/>
</dbReference>
<dbReference type="GO" id="GO:0043171">
    <property type="term" value="P:peptide catabolic process"/>
    <property type="evidence" value="ECO:0007669"/>
    <property type="project" value="UniProtKB-UniRule"/>
</dbReference>
<dbReference type="GO" id="GO:0006508">
    <property type="term" value="P:proteolysis"/>
    <property type="evidence" value="ECO:0007669"/>
    <property type="project" value="UniProtKB-UniRule"/>
</dbReference>
<dbReference type="CDD" id="cd03892">
    <property type="entry name" value="M20_peptT"/>
    <property type="match status" value="1"/>
</dbReference>
<dbReference type="FunFam" id="3.30.70.360:FF:000002">
    <property type="entry name" value="Peptidase T"/>
    <property type="match status" value="1"/>
</dbReference>
<dbReference type="Gene3D" id="3.30.70.360">
    <property type="match status" value="1"/>
</dbReference>
<dbReference type="Gene3D" id="3.40.630.10">
    <property type="entry name" value="Zn peptidases"/>
    <property type="match status" value="1"/>
</dbReference>
<dbReference type="HAMAP" id="MF_00550">
    <property type="entry name" value="Aminopeptidase_M20"/>
    <property type="match status" value="1"/>
</dbReference>
<dbReference type="InterPro" id="IPR001261">
    <property type="entry name" value="ArgE/DapE_CS"/>
</dbReference>
<dbReference type="InterPro" id="IPR036264">
    <property type="entry name" value="Bact_exopeptidase_dim_dom"/>
</dbReference>
<dbReference type="InterPro" id="IPR002933">
    <property type="entry name" value="Peptidase_M20"/>
</dbReference>
<dbReference type="InterPro" id="IPR011650">
    <property type="entry name" value="Peptidase_M20_dimer"/>
</dbReference>
<dbReference type="InterPro" id="IPR010161">
    <property type="entry name" value="Peptidase_M20B"/>
</dbReference>
<dbReference type="NCBIfam" id="TIGR01882">
    <property type="entry name" value="peptidase-T"/>
    <property type="match status" value="1"/>
</dbReference>
<dbReference type="NCBIfam" id="NF003976">
    <property type="entry name" value="PRK05469.1"/>
    <property type="match status" value="1"/>
</dbReference>
<dbReference type="NCBIfam" id="NF009920">
    <property type="entry name" value="PRK13381.1"/>
    <property type="match status" value="1"/>
</dbReference>
<dbReference type="PANTHER" id="PTHR42994">
    <property type="entry name" value="PEPTIDASE T"/>
    <property type="match status" value="1"/>
</dbReference>
<dbReference type="PANTHER" id="PTHR42994:SF1">
    <property type="entry name" value="PEPTIDASE T"/>
    <property type="match status" value="1"/>
</dbReference>
<dbReference type="Pfam" id="PF07687">
    <property type="entry name" value="M20_dimer"/>
    <property type="match status" value="1"/>
</dbReference>
<dbReference type="Pfam" id="PF01546">
    <property type="entry name" value="Peptidase_M20"/>
    <property type="match status" value="1"/>
</dbReference>
<dbReference type="PIRSF" id="PIRSF037215">
    <property type="entry name" value="Peptidase_M20B"/>
    <property type="match status" value="1"/>
</dbReference>
<dbReference type="SUPFAM" id="SSF55031">
    <property type="entry name" value="Bacterial exopeptidase dimerisation domain"/>
    <property type="match status" value="1"/>
</dbReference>
<dbReference type="SUPFAM" id="SSF53187">
    <property type="entry name" value="Zn-dependent exopeptidases"/>
    <property type="match status" value="1"/>
</dbReference>
<dbReference type="PROSITE" id="PS00758">
    <property type="entry name" value="ARGE_DAPE_CPG2_1"/>
    <property type="match status" value="1"/>
</dbReference>
<dbReference type="PROSITE" id="PS00759">
    <property type="entry name" value="ARGE_DAPE_CPG2_2"/>
    <property type="match status" value="1"/>
</dbReference>
<evidence type="ECO:0000255" key="1">
    <source>
        <dbReference type="HAMAP-Rule" id="MF_00550"/>
    </source>
</evidence>
<sequence>MKHDLIRRLTTYAKIDTQSDYASTTVPTTDGQWTLARLLVDELKEIGMSDVTVDANGYVMATLPANTDADIPTIGFLAHLDTATDFTGTNVNPQIVEAYDGEDLVLNATLPVILSPKDFPALKNYVGHTLMTTDGTTLLGADNKAGIAEIMTAMHHLITHPEIKHGRIRVAFTPDEEIGRGPHHFDVAAFDAKFAYTVDGGPLGELEYESFNAAAAEIIFHGTNVHPGTAKDKMVNSQKHAMAFQNRLPGDEAPEFTDGFEGFYHLISFEGSVEKTTVQYIIRDFDRSKFEARKHFLTALVEEWNKKYGAGSVEIKLNDQYYNMREKIEPHMEIVDIAHAAMESRGVTPIIKPIRGGTDGSQLSYMGLPTPNIFTGGENYHGKFEFISVDNMVKATEVVVAIAERFAQSAK</sequence>
<feature type="chain" id="PRO_1000129033" description="Peptidase T">
    <location>
        <begin position="1"/>
        <end position="411"/>
    </location>
</feature>
<feature type="active site" evidence="1">
    <location>
        <position position="81"/>
    </location>
</feature>
<feature type="active site" description="Proton acceptor" evidence="1">
    <location>
        <position position="176"/>
    </location>
</feature>
<feature type="binding site" evidence="1">
    <location>
        <position position="79"/>
    </location>
    <ligand>
        <name>Zn(2+)</name>
        <dbReference type="ChEBI" id="CHEBI:29105"/>
        <label>1</label>
    </ligand>
</feature>
<feature type="binding site" evidence="1">
    <location>
        <position position="142"/>
    </location>
    <ligand>
        <name>Zn(2+)</name>
        <dbReference type="ChEBI" id="CHEBI:29105"/>
        <label>1</label>
    </ligand>
</feature>
<feature type="binding site" evidence="1">
    <location>
        <position position="142"/>
    </location>
    <ligand>
        <name>Zn(2+)</name>
        <dbReference type="ChEBI" id="CHEBI:29105"/>
        <label>2</label>
    </ligand>
</feature>
<feature type="binding site" evidence="1">
    <location>
        <position position="177"/>
    </location>
    <ligand>
        <name>Zn(2+)</name>
        <dbReference type="ChEBI" id="CHEBI:29105"/>
        <label>2</label>
    </ligand>
</feature>
<feature type="binding site" evidence="1">
    <location>
        <position position="199"/>
    </location>
    <ligand>
        <name>Zn(2+)</name>
        <dbReference type="ChEBI" id="CHEBI:29105"/>
        <label>1</label>
    </ligand>
</feature>
<feature type="binding site" evidence="1">
    <location>
        <position position="381"/>
    </location>
    <ligand>
        <name>Zn(2+)</name>
        <dbReference type="ChEBI" id="CHEBI:29105"/>
        <label>2</label>
    </ligand>
</feature>
<protein>
    <recommendedName>
        <fullName evidence="1">Peptidase T</fullName>
        <ecNumber evidence="1">3.4.11.4</ecNumber>
    </recommendedName>
    <alternativeName>
        <fullName evidence="1">Aminotripeptidase</fullName>
        <shortName evidence="1">Tripeptidase</shortName>
    </alternativeName>
    <alternativeName>
        <fullName evidence="1">Tripeptide aminopeptidase</fullName>
    </alternativeName>
</protein>
<proteinExistence type="inferred from homology"/>
<gene>
    <name evidence="1" type="primary">pepT</name>
    <name type="ordered locus">Exig_2957</name>
</gene>
<organism>
    <name type="scientific">Exiguobacterium sibiricum (strain DSM 17290 / CCUG 55495 / CIP 109462 / JCM 13490 / 255-15)</name>
    <dbReference type="NCBI Taxonomy" id="262543"/>
    <lineage>
        <taxon>Bacteria</taxon>
        <taxon>Bacillati</taxon>
        <taxon>Bacillota</taxon>
        <taxon>Bacilli</taxon>
        <taxon>Bacillales</taxon>
        <taxon>Bacillales Family XII. Incertae Sedis</taxon>
        <taxon>Exiguobacterium</taxon>
    </lineage>
</organism>